<protein>
    <recommendedName>
        <fullName>Chorionic somatomammotropin hormone-like 1</fullName>
        <shortName>Chorionic somatomammotropin-like</shortName>
    </recommendedName>
    <alternativeName>
        <fullName>Lactogen-like</fullName>
    </alternativeName>
</protein>
<name>CSHL_HUMAN</name>
<evidence type="ECO:0000250" key="1"/>
<evidence type="ECO:0000255" key="2"/>
<evidence type="ECO:0000269" key="3">
    <source>
    </source>
</evidence>
<evidence type="ECO:0000269" key="4">
    <source>
    </source>
</evidence>
<evidence type="ECO:0000303" key="5">
    <source>
    </source>
</evidence>
<evidence type="ECO:0000305" key="6"/>
<organism>
    <name type="scientific">Homo sapiens</name>
    <name type="common">Human</name>
    <dbReference type="NCBI Taxonomy" id="9606"/>
    <lineage>
        <taxon>Eukaryota</taxon>
        <taxon>Metazoa</taxon>
        <taxon>Chordata</taxon>
        <taxon>Craniata</taxon>
        <taxon>Vertebrata</taxon>
        <taxon>Euteleostomi</taxon>
        <taxon>Mammalia</taxon>
        <taxon>Eutheria</taxon>
        <taxon>Euarchontoglires</taxon>
        <taxon>Primates</taxon>
        <taxon>Haplorrhini</taxon>
        <taxon>Catarrhini</taxon>
        <taxon>Hominidae</taxon>
        <taxon>Homo</taxon>
    </lineage>
</organism>
<sequence>MAAGSRTSLLLAFALLCLPWLQEAGAVQTVPLSRLFKEAMLQAHRAHQLAIDTYQEFISSWGMEAYITKEQKYSFLHDSQTSFCFSDSIPTSSNMEETQQKSNLELLHISLLLIESRLEPVRFLRSTFTNNLVYDTSDSDDYHLLKDLEEGIQMLMGRLEDGSHLTGQTLKQTYSKFDTNSHNHDALLKNYGLLHCFRKDMDKVETFLRMVQCRSVEGSCGF</sequence>
<feature type="signal peptide" evidence="2">
    <location>
        <begin position="1"/>
        <end position="26"/>
    </location>
</feature>
<feature type="chain" id="PRO_0000032959" description="Chorionic somatomammotropin hormone-like 1">
    <location>
        <begin position="27"/>
        <end position="222"/>
    </location>
</feature>
<feature type="binding site" evidence="1">
    <location>
        <position position="44"/>
    </location>
    <ligand>
        <name>Zn(2+)</name>
        <dbReference type="ChEBI" id="CHEBI:29105"/>
    </ligand>
</feature>
<feature type="binding site" evidence="1">
    <location>
        <position position="205"/>
    </location>
    <ligand>
        <name>Zn(2+)</name>
        <dbReference type="ChEBI" id="CHEBI:29105"/>
    </ligand>
</feature>
<feature type="disulfide bond" evidence="1">
    <location>
        <begin position="213"/>
        <end position="220"/>
    </location>
</feature>
<feature type="splice variant" id="VSP_040114" description="In isoform 4." evidence="5">
    <location>
        <begin position="1"/>
        <end position="94"/>
    </location>
</feature>
<feature type="splice variant" id="VSP_040115" description="In isoform 3." evidence="6">
    <location>
        <begin position="4"/>
        <end position="86"/>
    </location>
</feature>
<feature type="splice variant" id="VSP_040116" description="In isoform 2." evidence="6">
    <location>
        <begin position="64"/>
        <end position="86"/>
    </location>
</feature>
<feature type="sequence variant" id="VAR_059807" description="In dbSNP:rs2727307." evidence="3">
    <original>D</original>
    <variation>E</variation>
    <location>
        <position position="141"/>
    </location>
</feature>
<gene>
    <name type="primary">CSHL1</name>
    <name type="synonym">CSHP1</name>
    <name type="synonym">CSL</name>
</gene>
<accession>Q14406</accession>
<accession>D3DU26</accession>
<accession>D3DU27</accession>
<accession>Q0VDB2</accession>
<comment type="function">
    <text evidence="4">May be a novel gestational hormone required to compensate for absence of other members of the GH/CS cluster during gestation.</text>
</comment>
<comment type="interaction">
    <interactant intactId="EBI-21022791">
        <id>Q14406</id>
    </interactant>
    <interactant intactId="EBI-349854">
        <id>P13569</id>
        <label>CFTR</label>
    </interactant>
    <organismsDiffer>false</organismsDiffer>
    <experiments>3</experiments>
</comment>
<comment type="subcellular location">
    <subcellularLocation>
        <location evidence="4">Secreted</location>
    </subcellularLocation>
</comment>
<comment type="alternative products">
    <event type="alternative splicing"/>
    <isoform>
        <id>Q14406-1</id>
        <name>1</name>
        <sequence type="displayed"/>
    </isoform>
    <isoform>
        <id>Q14406-2</id>
        <name>2</name>
        <sequence type="described" ref="VSP_040116"/>
    </isoform>
    <isoform>
        <id>Q14406-3</id>
        <name>3</name>
        <sequence type="described" ref="VSP_040115"/>
    </isoform>
    <isoform>
        <id>Q14406-4</id>
        <name>4</name>
        <sequence type="described" ref="VSP_040114"/>
    </isoform>
</comment>
<comment type="similarity">
    <text evidence="6">Belongs to the somatotropin/prolactin family.</text>
</comment>
<dbReference type="EMBL" id="J03071">
    <property type="protein sequence ID" value="AAA52550.1"/>
    <property type="molecule type" value="Genomic_DNA"/>
</dbReference>
<dbReference type="EMBL" id="AC127029">
    <property type="status" value="NOT_ANNOTATED_CDS"/>
    <property type="molecule type" value="Genomic_DNA"/>
</dbReference>
<dbReference type="EMBL" id="CH471109">
    <property type="protein sequence ID" value="EAW94245.1"/>
    <property type="molecule type" value="Genomic_DNA"/>
</dbReference>
<dbReference type="EMBL" id="CH471109">
    <property type="protein sequence ID" value="EAW94246.1"/>
    <property type="molecule type" value="Genomic_DNA"/>
</dbReference>
<dbReference type="EMBL" id="CH471109">
    <property type="protein sequence ID" value="EAW94253.1"/>
    <property type="molecule type" value="Genomic_DNA"/>
</dbReference>
<dbReference type="EMBL" id="CH471109">
    <property type="protein sequence ID" value="EAW94264.1"/>
    <property type="molecule type" value="Genomic_DNA"/>
</dbReference>
<dbReference type="EMBL" id="BC119747">
    <property type="protein sequence ID" value="AAI19748.1"/>
    <property type="molecule type" value="mRNA"/>
</dbReference>
<dbReference type="CCDS" id="CCDS11652.1">
    <molecule id="Q14406-1"/>
</dbReference>
<dbReference type="CCDS" id="CCDS42370.1">
    <molecule id="Q14406-4"/>
</dbReference>
<dbReference type="CCDS" id="CCDS45759.1">
    <molecule id="Q14406-3"/>
</dbReference>
<dbReference type="PIR" id="B32435">
    <property type="entry name" value="B32435"/>
</dbReference>
<dbReference type="RefSeq" id="NP_072101.1">
    <molecule id="Q14406-1"/>
    <property type="nucleotide sequence ID" value="NM_022579.3"/>
</dbReference>
<dbReference type="RefSeq" id="NP_072102.1">
    <molecule id="Q14406-3"/>
    <property type="nucleotide sequence ID" value="NM_022580.3"/>
</dbReference>
<dbReference type="RefSeq" id="NP_072103.1">
    <molecule id="Q14406-2"/>
    <property type="nucleotide sequence ID" value="NM_022581.3"/>
</dbReference>
<dbReference type="SMR" id="Q14406"/>
<dbReference type="BioGRID" id="107831">
    <property type="interactions" value="8"/>
</dbReference>
<dbReference type="FunCoup" id="Q14406">
    <property type="interactions" value="25"/>
</dbReference>
<dbReference type="IntAct" id="Q14406">
    <property type="interactions" value="6"/>
</dbReference>
<dbReference type="MINT" id="Q14406"/>
<dbReference type="STRING" id="9606.ENSP00000309524"/>
<dbReference type="GlyGen" id="Q14406">
    <property type="glycosylation" value="1 site"/>
</dbReference>
<dbReference type="BioMuta" id="CSHL1"/>
<dbReference type="DMDM" id="313104096"/>
<dbReference type="jPOST" id="Q14406"/>
<dbReference type="MassIVE" id="Q14406"/>
<dbReference type="PaxDb" id="9606-ENSP00000309524"/>
<dbReference type="PeptideAtlas" id="Q14406"/>
<dbReference type="ProteomicsDB" id="59980">
    <molecule id="Q14406-1"/>
</dbReference>
<dbReference type="ProteomicsDB" id="59981">
    <molecule id="Q14406-2"/>
</dbReference>
<dbReference type="ProteomicsDB" id="59982">
    <molecule id="Q14406-3"/>
</dbReference>
<dbReference type="ProteomicsDB" id="59983">
    <molecule id="Q14406-4"/>
</dbReference>
<dbReference type="Antibodypedia" id="31484">
    <property type="antibodies" value="159 antibodies from 22 providers"/>
</dbReference>
<dbReference type="DNASU" id="1444"/>
<dbReference type="Ensembl" id="ENST00000309894.6">
    <molecule id="Q14406-1"/>
    <property type="protein sequence ID" value="ENSP00000309524.5"/>
    <property type="gene ID" value="ENSG00000204414.14"/>
</dbReference>
<dbReference type="Ensembl" id="ENST00000346606.10">
    <molecule id="Q14406-4"/>
    <property type="protein sequence ID" value="ENSP00000316360.10"/>
    <property type="gene ID" value="ENSG00000204414.14"/>
</dbReference>
<dbReference type="Ensembl" id="ENST00000438387.6">
    <molecule id="Q14406-3"/>
    <property type="protein sequence ID" value="ENSP00000402632.2"/>
    <property type="gene ID" value="ENSG00000204414.14"/>
</dbReference>
<dbReference type="GeneID" id="1444"/>
<dbReference type="KEGG" id="hsa:1444"/>
<dbReference type="MANE-Select" id="ENST00000309894.6">
    <property type="protein sequence ID" value="ENSP00000309524.5"/>
    <property type="RefSeq nucleotide sequence ID" value="NM_022579.3"/>
    <property type="RefSeq protein sequence ID" value="NP_072101.1"/>
</dbReference>
<dbReference type="UCSC" id="uc002jda.2">
    <molecule id="Q14406-1"/>
    <property type="organism name" value="human"/>
</dbReference>
<dbReference type="AGR" id="HGNC:2442"/>
<dbReference type="CTD" id="1444"/>
<dbReference type="DisGeNET" id="1444"/>
<dbReference type="GeneCards" id="CSHL1"/>
<dbReference type="HGNC" id="HGNC:2442">
    <property type="gene designation" value="CSHL1"/>
</dbReference>
<dbReference type="HPA" id="ENSG00000204414">
    <property type="expression patterns" value="Tissue enriched (placenta)"/>
</dbReference>
<dbReference type="MIM" id="603515">
    <property type="type" value="gene"/>
</dbReference>
<dbReference type="neXtProt" id="NX_Q14406"/>
<dbReference type="OpenTargets" id="ENSG00000204414"/>
<dbReference type="PharmGKB" id="PA26945"/>
<dbReference type="VEuPathDB" id="HostDB:ENSG00000204414"/>
<dbReference type="eggNOG" id="ENOG502R5GJ">
    <property type="taxonomic scope" value="Eukaryota"/>
</dbReference>
<dbReference type="GeneTree" id="ENSGT00950000182818"/>
<dbReference type="HOGENOM" id="CLU_088274_2_0_1"/>
<dbReference type="InParanoid" id="Q14406"/>
<dbReference type="OMA" id="DINMRTD"/>
<dbReference type="OrthoDB" id="9925773at2759"/>
<dbReference type="PAN-GO" id="Q14406">
    <property type="GO annotations" value="10 GO annotations based on evolutionary models"/>
</dbReference>
<dbReference type="PhylomeDB" id="Q14406"/>
<dbReference type="TreeFam" id="TF332592"/>
<dbReference type="PathwayCommons" id="Q14406"/>
<dbReference type="SignaLink" id="Q14406"/>
<dbReference type="BioGRID-ORCS" id="1444">
    <property type="hits" value="14 hits in 1129 CRISPR screens"/>
</dbReference>
<dbReference type="GenomeRNAi" id="1444"/>
<dbReference type="Pharos" id="Q14406">
    <property type="development level" value="Tbio"/>
</dbReference>
<dbReference type="PRO" id="PR:Q14406"/>
<dbReference type="Proteomes" id="UP000005640">
    <property type="component" value="Chromosome 17"/>
</dbReference>
<dbReference type="RNAct" id="Q14406">
    <property type="molecule type" value="protein"/>
</dbReference>
<dbReference type="Bgee" id="ENSG00000204414">
    <property type="expression patterns" value="Expressed in placenta and 26 other cell types or tissues"/>
</dbReference>
<dbReference type="ExpressionAtlas" id="Q14406">
    <property type="expression patterns" value="baseline and differential"/>
</dbReference>
<dbReference type="GO" id="GO:0005615">
    <property type="term" value="C:extracellular space"/>
    <property type="evidence" value="ECO:0000318"/>
    <property type="project" value="GO_Central"/>
</dbReference>
<dbReference type="GO" id="GO:0031982">
    <property type="term" value="C:vesicle"/>
    <property type="evidence" value="ECO:0007669"/>
    <property type="project" value="UniProtKB-ARBA"/>
</dbReference>
<dbReference type="GO" id="GO:0008083">
    <property type="term" value="F:growth factor activity"/>
    <property type="evidence" value="ECO:0000318"/>
    <property type="project" value="GO_Central"/>
</dbReference>
<dbReference type="GO" id="GO:0005131">
    <property type="term" value="F:growth hormone receptor binding"/>
    <property type="evidence" value="ECO:0000318"/>
    <property type="project" value="GO_Central"/>
</dbReference>
<dbReference type="GO" id="GO:0005179">
    <property type="term" value="F:hormone activity"/>
    <property type="evidence" value="ECO:0000318"/>
    <property type="project" value="GO_Central"/>
</dbReference>
<dbReference type="GO" id="GO:0046872">
    <property type="term" value="F:metal ion binding"/>
    <property type="evidence" value="ECO:0007669"/>
    <property type="project" value="UniProtKB-KW"/>
</dbReference>
<dbReference type="GO" id="GO:0048513">
    <property type="term" value="P:animal organ development"/>
    <property type="evidence" value="ECO:0000318"/>
    <property type="project" value="GO_Central"/>
</dbReference>
<dbReference type="GO" id="GO:0060396">
    <property type="term" value="P:growth hormone receptor signaling pathway"/>
    <property type="evidence" value="ECO:0000318"/>
    <property type="project" value="GO_Central"/>
</dbReference>
<dbReference type="GO" id="GO:0046427">
    <property type="term" value="P:positive regulation of receptor signaling pathway via JAK-STAT"/>
    <property type="evidence" value="ECO:0000318"/>
    <property type="project" value="GO_Central"/>
</dbReference>
<dbReference type="GO" id="GO:0031667">
    <property type="term" value="P:response to nutrient levels"/>
    <property type="evidence" value="ECO:0000318"/>
    <property type="project" value="GO_Central"/>
</dbReference>
<dbReference type="CDD" id="cd10285">
    <property type="entry name" value="somatotropin_like"/>
    <property type="match status" value="1"/>
</dbReference>
<dbReference type="FunFam" id="1.20.1250.10:FF:000012">
    <property type="entry name" value="Growth hormone 1"/>
    <property type="match status" value="1"/>
</dbReference>
<dbReference type="Gene3D" id="1.20.1250.10">
    <property type="match status" value="1"/>
</dbReference>
<dbReference type="InterPro" id="IPR009079">
    <property type="entry name" value="4_helix_cytokine-like_core"/>
</dbReference>
<dbReference type="InterPro" id="IPR034975">
    <property type="entry name" value="Somatotropin"/>
</dbReference>
<dbReference type="InterPro" id="IPR001400">
    <property type="entry name" value="Somatotropin/Prolactin"/>
</dbReference>
<dbReference type="InterPro" id="IPR018116">
    <property type="entry name" value="Somatotropin_CS"/>
</dbReference>
<dbReference type="PANTHER" id="PTHR11417:SF67">
    <property type="entry name" value="CHORIONIC SOMATOMAMMOTROPIN HORMONE 1-RELATED"/>
    <property type="match status" value="1"/>
</dbReference>
<dbReference type="PANTHER" id="PTHR11417">
    <property type="entry name" value="SOMATOTROPIN,PROLACTIN"/>
    <property type="match status" value="1"/>
</dbReference>
<dbReference type="Pfam" id="PF00103">
    <property type="entry name" value="Hormone_1"/>
    <property type="match status" value="1"/>
</dbReference>
<dbReference type="PRINTS" id="PR00836">
    <property type="entry name" value="SOMATOTROPIN"/>
</dbReference>
<dbReference type="SUPFAM" id="SSF47266">
    <property type="entry name" value="4-helical cytokines"/>
    <property type="match status" value="1"/>
</dbReference>
<dbReference type="PROSITE" id="PS00338">
    <property type="entry name" value="SOMATOTROPIN_2"/>
    <property type="match status" value="1"/>
</dbReference>
<reference key="1">
    <citation type="journal article" date="1989" name="Genomics">
        <title>The human growth hormone locus: nucleotide sequence, biology, and evolution.</title>
        <authorList>
            <person name="Chen E.Y."/>
            <person name="Liao Y.C."/>
            <person name="Smith D.H."/>
            <person name="Barrera-Saldana H.A."/>
            <person name="Gelinas R.E."/>
            <person name="Seeburg P.H."/>
        </authorList>
    </citation>
    <scope>NUCLEOTIDE SEQUENCE [GENOMIC DNA]</scope>
    <source>
        <tissue>Placenta</tissue>
    </source>
</reference>
<reference key="2">
    <citation type="journal article" date="1994" name="J. Biol. Chem.">
        <title>Complex alternative splicing partially inactivates the human chorionic somatomammotropin-like (hCS-L) gene.</title>
        <authorList>
            <person name="Misra-Press A."/>
            <person name="Cooke N.E."/>
            <person name="Liebhaber S.A."/>
        </authorList>
    </citation>
    <scope>NUCLEOTIDE SEQUENCE [GENOMIC DNA]</scope>
    <scope>ALTERNATIVE SPLICING (ISOFORMS 1; 2 AND 3)</scope>
    <scope>FUNCTION</scope>
    <scope>SUBCELLULAR LOCATION</scope>
</reference>
<reference key="3">
    <citation type="journal article" date="2006" name="Nature">
        <title>DNA sequence of human chromosome 17 and analysis of rearrangement in the human lineage.</title>
        <authorList>
            <person name="Zody M.C."/>
            <person name="Garber M."/>
            <person name="Adams D.J."/>
            <person name="Sharpe T."/>
            <person name="Harrow J."/>
            <person name="Lupski J.R."/>
            <person name="Nicholson C."/>
            <person name="Searle S.M."/>
            <person name="Wilming L."/>
            <person name="Young S.K."/>
            <person name="Abouelleil A."/>
            <person name="Allen N.R."/>
            <person name="Bi W."/>
            <person name="Bloom T."/>
            <person name="Borowsky M.L."/>
            <person name="Bugalter B.E."/>
            <person name="Butler J."/>
            <person name="Chang J.L."/>
            <person name="Chen C.-K."/>
            <person name="Cook A."/>
            <person name="Corum B."/>
            <person name="Cuomo C.A."/>
            <person name="de Jong P.J."/>
            <person name="DeCaprio D."/>
            <person name="Dewar K."/>
            <person name="FitzGerald M."/>
            <person name="Gilbert J."/>
            <person name="Gibson R."/>
            <person name="Gnerre S."/>
            <person name="Goldstein S."/>
            <person name="Grafham D.V."/>
            <person name="Grocock R."/>
            <person name="Hafez N."/>
            <person name="Hagopian D.S."/>
            <person name="Hart E."/>
            <person name="Norman C.H."/>
            <person name="Humphray S."/>
            <person name="Jaffe D.B."/>
            <person name="Jones M."/>
            <person name="Kamal M."/>
            <person name="Khodiyar V.K."/>
            <person name="LaButti K."/>
            <person name="Laird G."/>
            <person name="Lehoczky J."/>
            <person name="Liu X."/>
            <person name="Lokyitsang T."/>
            <person name="Loveland J."/>
            <person name="Lui A."/>
            <person name="Macdonald P."/>
            <person name="Major J.E."/>
            <person name="Matthews L."/>
            <person name="Mauceli E."/>
            <person name="McCarroll S.A."/>
            <person name="Mihalev A.H."/>
            <person name="Mudge J."/>
            <person name="Nguyen C."/>
            <person name="Nicol R."/>
            <person name="O'Leary S.B."/>
            <person name="Osoegawa K."/>
            <person name="Schwartz D.C."/>
            <person name="Shaw-Smith C."/>
            <person name="Stankiewicz P."/>
            <person name="Steward C."/>
            <person name="Swarbreck D."/>
            <person name="Venkataraman V."/>
            <person name="Whittaker C.A."/>
            <person name="Yang X."/>
            <person name="Zimmer A.R."/>
            <person name="Bradley A."/>
            <person name="Hubbard T."/>
            <person name="Birren B.W."/>
            <person name="Rogers J."/>
            <person name="Lander E.S."/>
            <person name="Nusbaum C."/>
        </authorList>
    </citation>
    <scope>NUCLEOTIDE SEQUENCE [LARGE SCALE GENOMIC DNA]</scope>
</reference>
<reference key="4">
    <citation type="submission" date="2005-09" db="EMBL/GenBank/DDBJ databases">
        <authorList>
            <person name="Mural R.J."/>
            <person name="Istrail S."/>
            <person name="Sutton G.G."/>
            <person name="Florea L."/>
            <person name="Halpern A.L."/>
            <person name="Mobarry C.M."/>
            <person name="Lippert R."/>
            <person name="Walenz B."/>
            <person name="Shatkay H."/>
            <person name="Dew I."/>
            <person name="Miller J.R."/>
            <person name="Flanigan M.J."/>
            <person name="Edwards N.J."/>
            <person name="Bolanos R."/>
            <person name="Fasulo D."/>
            <person name="Halldorsson B.V."/>
            <person name="Hannenhalli S."/>
            <person name="Turner R."/>
            <person name="Yooseph S."/>
            <person name="Lu F."/>
            <person name="Nusskern D.R."/>
            <person name="Shue B.C."/>
            <person name="Zheng X.H."/>
            <person name="Zhong F."/>
            <person name="Delcher A.L."/>
            <person name="Huson D.H."/>
            <person name="Kravitz S.A."/>
            <person name="Mouchard L."/>
            <person name="Reinert K."/>
            <person name="Remington K.A."/>
            <person name="Clark A.G."/>
            <person name="Waterman M.S."/>
            <person name="Eichler E.E."/>
            <person name="Adams M.D."/>
            <person name="Hunkapiller M.W."/>
            <person name="Myers E.W."/>
            <person name="Venter J.C."/>
        </authorList>
    </citation>
    <scope>NUCLEOTIDE SEQUENCE [LARGE SCALE GENOMIC DNA]</scope>
</reference>
<reference key="5">
    <citation type="journal article" date="2004" name="Genome Res.">
        <title>The status, quality, and expansion of the NIH full-length cDNA project: the Mammalian Gene Collection (MGC).</title>
        <authorList>
            <consortium name="The MGC Project Team"/>
        </authorList>
    </citation>
    <scope>NUCLEOTIDE SEQUENCE [LARGE SCALE MRNA] (ISOFORM 4)</scope>
    <scope>VARIANT GLU-141</scope>
</reference>
<proteinExistence type="evidence at protein level"/>
<keyword id="KW-0025">Alternative splicing</keyword>
<keyword id="KW-1015">Disulfide bond</keyword>
<keyword id="KW-0372">Hormone</keyword>
<keyword id="KW-0479">Metal-binding</keyword>
<keyword id="KW-1267">Proteomics identification</keyword>
<keyword id="KW-1185">Reference proteome</keyword>
<keyword id="KW-0964">Secreted</keyword>
<keyword id="KW-0732">Signal</keyword>
<keyword id="KW-0862">Zinc</keyword>